<dbReference type="EC" id="1.17.7.4" evidence="1"/>
<dbReference type="EMBL" id="U38915">
    <property type="protein sequence ID" value="AAB72119.1"/>
    <property type="molecule type" value="Genomic_DNA"/>
</dbReference>
<dbReference type="EMBL" id="BA000022">
    <property type="protein sequence ID" value="BAA10159.1"/>
    <property type="status" value="ALT_INIT"/>
    <property type="molecule type" value="Genomic_DNA"/>
</dbReference>
<dbReference type="PIR" id="S76307">
    <property type="entry name" value="S76307"/>
</dbReference>
<dbReference type="SMR" id="Q55643"/>
<dbReference type="FunCoup" id="Q55643">
    <property type="interactions" value="308"/>
</dbReference>
<dbReference type="IntAct" id="Q55643">
    <property type="interactions" value="4"/>
</dbReference>
<dbReference type="STRING" id="1148.gene:10499652"/>
<dbReference type="PaxDb" id="1148-1001532"/>
<dbReference type="EnsemblBacteria" id="BAA10159">
    <property type="protein sequence ID" value="BAA10159"/>
    <property type="gene ID" value="BAA10159"/>
</dbReference>
<dbReference type="KEGG" id="syn:slr0348"/>
<dbReference type="eggNOG" id="COG0761">
    <property type="taxonomic scope" value="Bacteria"/>
</dbReference>
<dbReference type="InParanoid" id="Q55643"/>
<dbReference type="PhylomeDB" id="Q55643"/>
<dbReference type="UniPathway" id="UPA00056">
    <property type="reaction ID" value="UER00097"/>
</dbReference>
<dbReference type="UniPathway" id="UPA00059">
    <property type="reaction ID" value="UER00105"/>
</dbReference>
<dbReference type="Proteomes" id="UP000001425">
    <property type="component" value="Chromosome"/>
</dbReference>
<dbReference type="GO" id="GO:0051539">
    <property type="term" value="F:4 iron, 4 sulfur cluster binding"/>
    <property type="evidence" value="ECO:0007669"/>
    <property type="project" value="UniProtKB-UniRule"/>
</dbReference>
<dbReference type="GO" id="GO:0051745">
    <property type="term" value="F:4-hydroxy-3-methylbut-2-enyl diphosphate reductase activity"/>
    <property type="evidence" value="ECO:0007669"/>
    <property type="project" value="UniProtKB-UniRule"/>
</dbReference>
<dbReference type="GO" id="GO:0046872">
    <property type="term" value="F:metal ion binding"/>
    <property type="evidence" value="ECO:0007669"/>
    <property type="project" value="UniProtKB-KW"/>
</dbReference>
<dbReference type="GO" id="GO:0050992">
    <property type="term" value="P:dimethylallyl diphosphate biosynthetic process"/>
    <property type="evidence" value="ECO:0007669"/>
    <property type="project" value="UniProtKB-UniRule"/>
</dbReference>
<dbReference type="GO" id="GO:0019288">
    <property type="term" value="P:isopentenyl diphosphate biosynthetic process, methylerythritol 4-phosphate pathway"/>
    <property type="evidence" value="ECO:0007669"/>
    <property type="project" value="UniProtKB-UniRule"/>
</dbReference>
<dbReference type="GO" id="GO:0016114">
    <property type="term" value="P:terpenoid biosynthetic process"/>
    <property type="evidence" value="ECO:0007669"/>
    <property type="project" value="UniProtKB-UniRule"/>
</dbReference>
<dbReference type="CDD" id="cd13944">
    <property type="entry name" value="lytB_ispH"/>
    <property type="match status" value="1"/>
</dbReference>
<dbReference type="Gene3D" id="3.40.50.11270">
    <property type="match status" value="1"/>
</dbReference>
<dbReference type="Gene3D" id="3.40.1010.20">
    <property type="entry name" value="4-hydroxy-3-methylbut-2-enyl diphosphate reductase, catalytic domain"/>
    <property type="match status" value="2"/>
</dbReference>
<dbReference type="HAMAP" id="MF_00191">
    <property type="entry name" value="IspH"/>
    <property type="match status" value="1"/>
</dbReference>
<dbReference type="InterPro" id="IPR003451">
    <property type="entry name" value="LytB/IspH"/>
</dbReference>
<dbReference type="NCBIfam" id="TIGR00216">
    <property type="entry name" value="ispH_lytB"/>
    <property type="match status" value="1"/>
</dbReference>
<dbReference type="NCBIfam" id="NF009911">
    <property type="entry name" value="PRK13371.1"/>
    <property type="match status" value="1"/>
</dbReference>
<dbReference type="PANTHER" id="PTHR31619">
    <property type="entry name" value="4-HYDROXY-3-METHYLBUT-2-ENYL DIPHOSPHATE REDUCTASE, CHLOROPLASTIC"/>
    <property type="match status" value="1"/>
</dbReference>
<dbReference type="PANTHER" id="PTHR31619:SF5">
    <property type="entry name" value="4-HYDROXY-3-METHYLBUT-2-ENYL DIPHOSPHATE REDUCTASE, CHLOROPLASTIC"/>
    <property type="match status" value="1"/>
</dbReference>
<dbReference type="Pfam" id="PF02401">
    <property type="entry name" value="LYTB"/>
    <property type="match status" value="1"/>
</dbReference>
<organism>
    <name type="scientific">Synechocystis sp. (strain ATCC 27184 / PCC 6803 / Kazusa)</name>
    <dbReference type="NCBI Taxonomy" id="1111708"/>
    <lineage>
        <taxon>Bacteria</taxon>
        <taxon>Bacillati</taxon>
        <taxon>Cyanobacteriota</taxon>
        <taxon>Cyanophyceae</taxon>
        <taxon>Synechococcales</taxon>
        <taxon>Merismopediaceae</taxon>
        <taxon>Synechocystis</taxon>
    </lineage>
</organism>
<sequence length="379" mass="42415">MGVMNTEYQSHLIQEIRQNNYRLERGDVTILLAEAFGFCWGVERAVAMAYETRQHFPGDRLWITNEIIHNPSVNQRLREMEVNFIDVVNGEKDFSGVAKGDVVILPAFGASVEEMQLLNDRECTIVDTTCPWVSKVWNSVEKHKKKEHTSIIHGKYNHEETIATSSFAGTYLIVLNMAEAQKVCDYILHGGDRQEFLDYFANAHSAGFDPDQDLVRLGVANQTTMLKSETEMIGKLFEKTLLQKYGPIELNNHFMSFNTICDATQERQDAMFDLVEEDLSLMVVIGGFNSSNTTHLQEIAVEHGIPSVHIDSGDRIGPGNRVEHKPLGKDLEVLEPWLPAGKITVGVTSGASTPDKVVEEVMKKILAIKEAQPVLEIAG</sequence>
<protein>
    <recommendedName>
        <fullName evidence="1">4-hydroxy-3-methylbut-2-enyl diphosphate reductase</fullName>
        <shortName evidence="1">HMBPP reductase</shortName>
        <ecNumber evidence="1">1.17.7.4</ecNumber>
    </recommendedName>
</protein>
<evidence type="ECO:0000255" key="1">
    <source>
        <dbReference type="HAMAP-Rule" id="MF_00191"/>
    </source>
</evidence>
<evidence type="ECO:0000269" key="2">
    <source>
    </source>
</evidence>
<evidence type="ECO:0000305" key="3"/>
<accession>Q55643</accession>
<accession>Q55066</accession>
<feature type="chain" id="PRO_0000128880" description="4-hydroxy-3-methylbut-2-enyl diphosphate reductase">
    <location>
        <begin position="1"/>
        <end position="379"/>
    </location>
</feature>
<feature type="active site" description="Proton donor" evidence="1">
    <location>
        <position position="160"/>
    </location>
</feature>
<feature type="binding site" evidence="1">
    <location>
        <position position="39"/>
    </location>
    <ligand>
        <name>[4Fe-4S] cluster</name>
        <dbReference type="ChEBI" id="CHEBI:49883"/>
    </ligand>
</feature>
<feature type="binding site" evidence="1">
    <location>
        <position position="69"/>
    </location>
    <ligand>
        <name>(2E)-4-hydroxy-3-methylbut-2-enyl diphosphate</name>
        <dbReference type="ChEBI" id="CHEBI:128753"/>
    </ligand>
</feature>
<feature type="binding site" evidence="1">
    <location>
        <position position="69"/>
    </location>
    <ligand>
        <name>dimethylallyl diphosphate</name>
        <dbReference type="ChEBI" id="CHEBI:57623"/>
    </ligand>
</feature>
<feature type="binding site" evidence="1">
    <location>
        <position position="69"/>
    </location>
    <ligand>
        <name>isopentenyl diphosphate</name>
        <dbReference type="ChEBI" id="CHEBI:128769"/>
    </ligand>
</feature>
<feature type="binding site" evidence="1">
    <location>
        <position position="130"/>
    </location>
    <ligand>
        <name>[4Fe-4S] cluster</name>
        <dbReference type="ChEBI" id="CHEBI:49883"/>
    </ligand>
</feature>
<feature type="binding site" evidence="1">
    <location>
        <position position="158"/>
    </location>
    <ligand>
        <name>(2E)-4-hydroxy-3-methylbut-2-enyl diphosphate</name>
        <dbReference type="ChEBI" id="CHEBI:128753"/>
    </ligand>
</feature>
<feature type="binding site" evidence="1">
    <location>
        <position position="158"/>
    </location>
    <ligand>
        <name>dimethylallyl diphosphate</name>
        <dbReference type="ChEBI" id="CHEBI:57623"/>
    </ligand>
</feature>
<feature type="binding site" evidence="1">
    <location>
        <position position="158"/>
    </location>
    <ligand>
        <name>isopentenyl diphosphate</name>
        <dbReference type="ChEBI" id="CHEBI:128769"/>
    </ligand>
</feature>
<feature type="binding site" evidence="1">
    <location>
        <position position="223"/>
    </location>
    <ligand>
        <name>(2E)-4-hydroxy-3-methylbut-2-enyl diphosphate</name>
        <dbReference type="ChEBI" id="CHEBI:128753"/>
    </ligand>
</feature>
<feature type="binding site" evidence="1">
    <location>
        <position position="261"/>
    </location>
    <ligand>
        <name>[4Fe-4S] cluster</name>
        <dbReference type="ChEBI" id="CHEBI:49883"/>
    </ligand>
</feature>
<feature type="binding site" evidence="1">
    <location>
        <position position="290"/>
    </location>
    <ligand>
        <name>(2E)-4-hydroxy-3-methylbut-2-enyl diphosphate</name>
        <dbReference type="ChEBI" id="CHEBI:128753"/>
    </ligand>
</feature>
<feature type="binding site" evidence="1">
    <location>
        <position position="290"/>
    </location>
    <ligand>
        <name>dimethylallyl diphosphate</name>
        <dbReference type="ChEBI" id="CHEBI:57623"/>
    </ligand>
</feature>
<feature type="binding site" evidence="1">
    <location>
        <position position="290"/>
    </location>
    <ligand>
        <name>isopentenyl diphosphate</name>
        <dbReference type="ChEBI" id="CHEBI:128769"/>
    </ligand>
</feature>
<feature type="binding site" evidence="1">
    <location>
        <position position="291"/>
    </location>
    <ligand>
        <name>(2E)-4-hydroxy-3-methylbut-2-enyl diphosphate</name>
        <dbReference type="ChEBI" id="CHEBI:128753"/>
    </ligand>
</feature>
<feature type="binding site" evidence="1">
    <location>
        <position position="291"/>
    </location>
    <ligand>
        <name>dimethylallyl diphosphate</name>
        <dbReference type="ChEBI" id="CHEBI:57623"/>
    </ligand>
</feature>
<feature type="binding site" evidence="1">
    <location>
        <position position="291"/>
    </location>
    <ligand>
        <name>isopentenyl diphosphate</name>
        <dbReference type="ChEBI" id="CHEBI:128769"/>
    </ligand>
</feature>
<feature type="binding site" evidence="1">
    <location>
        <position position="292"/>
    </location>
    <ligand>
        <name>(2E)-4-hydroxy-3-methylbut-2-enyl diphosphate</name>
        <dbReference type="ChEBI" id="CHEBI:128753"/>
    </ligand>
</feature>
<feature type="binding site" evidence="1">
    <location>
        <position position="292"/>
    </location>
    <ligand>
        <name>dimethylallyl diphosphate</name>
        <dbReference type="ChEBI" id="CHEBI:57623"/>
    </ligand>
</feature>
<feature type="binding site" evidence="1">
    <location>
        <position position="292"/>
    </location>
    <ligand>
        <name>isopentenyl diphosphate</name>
        <dbReference type="ChEBI" id="CHEBI:128769"/>
    </ligand>
</feature>
<feature type="binding site" evidence="1">
    <location>
        <position position="352"/>
    </location>
    <ligand>
        <name>(2E)-4-hydroxy-3-methylbut-2-enyl diphosphate</name>
        <dbReference type="ChEBI" id="CHEBI:128753"/>
    </ligand>
</feature>
<feature type="binding site" evidence="1">
    <location>
        <position position="352"/>
    </location>
    <ligand>
        <name>dimethylallyl diphosphate</name>
        <dbReference type="ChEBI" id="CHEBI:57623"/>
    </ligand>
</feature>
<feature type="binding site" evidence="1">
    <location>
        <position position="352"/>
    </location>
    <ligand>
        <name>isopentenyl diphosphate</name>
        <dbReference type="ChEBI" id="CHEBI:128769"/>
    </ligand>
</feature>
<proteinExistence type="inferred from homology"/>
<comment type="function">
    <text evidence="1">Catalyzes the conversion of 1-hydroxy-2-methyl-2-(E)-butenyl 4-diphosphate (HMBPP) into a mixture of isopentenyl diphosphate (IPP) and dimethylallyl diphosphate (DMAPP). Acts in the terminal step of the DOXP/MEP pathway for isoprenoid precursor biosynthesis.</text>
</comment>
<comment type="catalytic activity">
    <reaction evidence="1">
        <text>isopentenyl diphosphate + 2 oxidized [2Fe-2S]-[ferredoxin] + H2O = (2E)-4-hydroxy-3-methylbut-2-enyl diphosphate + 2 reduced [2Fe-2S]-[ferredoxin] + 2 H(+)</text>
        <dbReference type="Rhea" id="RHEA:24488"/>
        <dbReference type="Rhea" id="RHEA-COMP:10000"/>
        <dbReference type="Rhea" id="RHEA-COMP:10001"/>
        <dbReference type="ChEBI" id="CHEBI:15377"/>
        <dbReference type="ChEBI" id="CHEBI:15378"/>
        <dbReference type="ChEBI" id="CHEBI:33737"/>
        <dbReference type="ChEBI" id="CHEBI:33738"/>
        <dbReference type="ChEBI" id="CHEBI:128753"/>
        <dbReference type="ChEBI" id="CHEBI:128769"/>
        <dbReference type="EC" id="1.17.7.4"/>
    </reaction>
</comment>
<comment type="catalytic activity">
    <reaction evidence="1">
        <text>dimethylallyl diphosphate + 2 oxidized [2Fe-2S]-[ferredoxin] + H2O = (2E)-4-hydroxy-3-methylbut-2-enyl diphosphate + 2 reduced [2Fe-2S]-[ferredoxin] + 2 H(+)</text>
        <dbReference type="Rhea" id="RHEA:24825"/>
        <dbReference type="Rhea" id="RHEA-COMP:10000"/>
        <dbReference type="Rhea" id="RHEA-COMP:10001"/>
        <dbReference type="ChEBI" id="CHEBI:15377"/>
        <dbReference type="ChEBI" id="CHEBI:15378"/>
        <dbReference type="ChEBI" id="CHEBI:33737"/>
        <dbReference type="ChEBI" id="CHEBI:33738"/>
        <dbReference type="ChEBI" id="CHEBI:57623"/>
        <dbReference type="ChEBI" id="CHEBI:128753"/>
        <dbReference type="EC" id="1.17.7.4"/>
    </reaction>
</comment>
<comment type="cofactor">
    <cofactor evidence="1">
        <name>[4Fe-4S] cluster</name>
        <dbReference type="ChEBI" id="CHEBI:49883"/>
    </cofactor>
    <text evidence="1">Binds 1 [4Fe-4S] cluster per subunit.</text>
</comment>
<comment type="pathway">
    <text evidence="1 2">Isoprenoid biosynthesis; dimethylallyl diphosphate biosynthesis; dimethylallyl diphosphate from (2E)-4-hydroxy-3-methylbutenyl diphosphate: step 1/1.</text>
</comment>
<comment type="pathway">
    <text evidence="1 2">Isoprenoid biosynthesis; isopentenyl diphosphate biosynthesis via DXP pathway; isopentenyl diphosphate from 1-deoxy-D-xylulose 5-phosphate: step 6/6.</text>
</comment>
<comment type="similarity">
    <text evidence="1">Belongs to the IspH family.</text>
</comment>
<comment type="sequence caution" evidence="3">
    <conflict type="erroneous initiation">
        <sequence resource="EMBL-CDS" id="BAA10159"/>
    </conflict>
</comment>
<gene>
    <name evidence="1" type="primary">ispH</name>
    <name type="synonym">lytB</name>
    <name type="ordered locus">slr0348</name>
</gene>
<keyword id="KW-0004">4Fe-4S</keyword>
<keyword id="KW-0408">Iron</keyword>
<keyword id="KW-0411">Iron-sulfur</keyword>
<keyword id="KW-0414">Isoprene biosynthesis</keyword>
<keyword id="KW-0479">Metal-binding</keyword>
<keyword id="KW-0560">Oxidoreductase</keyword>
<keyword id="KW-1185">Reference proteome</keyword>
<reference key="1">
    <citation type="journal article" date="1997" name="Gene">
        <title>Three insertion sequences from the cyanobacterium Synechocystis PCC6803 support the occurrence of horizontal DNA transfer among bacteria.</title>
        <authorList>
            <person name="Cassier-Chauvat C."/>
            <person name="Poncelet M."/>
            <person name="Chauvat F."/>
        </authorList>
    </citation>
    <scope>NUCLEOTIDE SEQUENCE [GENOMIC DNA]</scope>
</reference>
<reference key="2">
    <citation type="journal article" date="1995" name="DNA Res.">
        <title>Sequence analysis of the genome of the unicellular cyanobacterium Synechocystis sp. strain PCC6803. I. Sequence features in the 1 Mb region from map positions 64% to 92% of the genome.</title>
        <authorList>
            <person name="Kaneko T."/>
            <person name="Tanaka A."/>
            <person name="Sato S."/>
            <person name="Kotani H."/>
            <person name="Sazuka T."/>
            <person name="Miyajima N."/>
            <person name="Sugiura M."/>
            <person name="Tabata S."/>
        </authorList>
    </citation>
    <scope>NUCLEOTIDE SEQUENCE [LARGE SCALE GENOMIC DNA]</scope>
    <source>
        <strain>ATCC 27184 / PCC 6803 / N-1</strain>
    </source>
</reference>
<reference key="3">
    <citation type="journal article" date="1996" name="DNA Res.">
        <title>Sequence analysis of the genome of the unicellular cyanobacterium Synechocystis sp. strain PCC6803. II. Sequence determination of the entire genome and assignment of potential protein-coding regions.</title>
        <authorList>
            <person name="Kaneko T."/>
            <person name="Sato S."/>
            <person name="Kotani H."/>
            <person name="Tanaka A."/>
            <person name="Asamizu E."/>
            <person name="Nakamura Y."/>
            <person name="Miyajima N."/>
            <person name="Hirosawa M."/>
            <person name="Sugiura M."/>
            <person name="Sasamoto S."/>
            <person name="Kimura T."/>
            <person name="Hosouchi T."/>
            <person name="Matsuno A."/>
            <person name="Muraki A."/>
            <person name="Nakazaki N."/>
            <person name="Naruo K."/>
            <person name="Okumura S."/>
            <person name="Shimpo S."/>
            <person name="Takeuchi C."/>
            <person name="Wada T."/>
            <person name="Watanabe A."/>
            <person name="Yamada M."/>
            <person name="Yasuda M."/>
            <person name="Tabata S."/>
        </authorList>
    </citation>
    <scope>NUCLEOTIDE SEQUENCE [LARGE SCALE GENOMIC DNA]</scope>
    <source>
        <strain>ATCC 27184 / PCC 6803 / Kazusa</strain>
    </source>
</reference>
<reference key="4">
    <citation type="journal article" date="2000" name="J. Bacteriol.">
        <title>Evidence of a role for LytB in the nonmevalonate pathway of isoprenoid biosynthesis.</title>
        <authorList>
            <person name="Cunningham F.X. Jr."/>
            <person name="Lafond T.P."/>
            <person name="Gantt E."/>
        </authorList>
    </citation>
    <scope>PATHWAY</scope>
</reference>
<name>ISPH_SYNY3</name>